<proteinExistence type="evidence at protein level"/>
<feature type="chain" id="PRO_0000186286" description="Mitogen-activated protein kinase 13">
    <location>
        <begin position="1"/>
        <end position="365"/>
    </location>
</feature>
<feature type="domain" description="Protein kinase" evidence="1">
    <location>
        <begin position="25"/>
        <end position="308"/>
    </location>
</feature>
<feature type="short sequence motif" description="TXY">
    <location>
        <begin position="180"/>
        <end position="182"/>
    </location>
</feature>
<feature type="active site" description="Proton acceptor" evidence="1">
    <location>
        <position position="150"/>
    </location>
</feature>
<feature type="binding site" evidence="1">
    <location>
        <begin position="31"/>
        <end position="39"/>
    </location>
    <ligand>
        <name>ATP</name>
        <dbReference type="ChEBI" id="CHEBI:30616"/>
    </ligand>
</feature>
<feature type="binding site" evidence="1">
    <location>
        <position position="54"/>
    </location>
    <ligand>
        <name>ATP</name>
        <dbReference type="ChEBI" id="CHEBI:30616"/>
    </ligand>
</feature>
<feature type="modified residue" description="Phosphoserine" evidence="17">
    <location>
        <position position="47"/>
    </location>
</feature>
<feature type="modified residue" description="Phosphothreonine; by MAP2K3, MAP2K4, MAP2K6 and MAP2K7" evidence="13">
    <location>
        <position position="180"/>
    </location>
</feature>
<feature type="modified residue" description="Phosphotyrosine; by MAP2K3, MAP2K4, MAP2K6 and MAP2K7" evidence="13">
    <location>
        <position position="182"/>
    </location>
</feature>
<feature type="modified residue" description="Phosphoserine" evidence="18">
    <location>
        <position position="350"/>
    </location>
</feature>
<feature type="splice variant" id="VSP_056558" description="In isoform 2." evidence="15">
    <original>VDIWSVGCIMAEMLTGKTLFKGKDYLDQLTQILKVTGVPGTEFVQKLNDKAAK</original>
    <variation>GQILHPVPATDPQEGFHSAVPTGQPPGCGPAGEDAGARRGQAPDGRAGPHPSL</variation>
    <location>
        <begin position="204"/>
        <end position="256"/>
    </location>
</feature>
<feature type="splice variant" id="VSP_056559" description="In isoform 2." evidence="15">
    <location>
        <begin position="257"/>
        <end position="364"/>
    </location>
</feature>
<feature type="sequence variant" id="VAR_042267" description="In dbSNP:rs55776345." evidence="8">
    <original>S</original>
    <variation>L</variation>
    <location>
        <position position="41"/>
    </location>
</feature>
<feature type="sequence variant" id="VAR_042268" description="In dbSNP:rs55990045." evidence="8">
    <original>A</original>
    <variation>V</variation>
    <location>
        <position position="282"/>
    </location>
</feature>
<feature type="sequence variant" id="VAR_042269" description="In dbSNP:rs41270090." evidence="8">
    <original>A</original>
    <variation>T</variation>
    <location>
        <position position="300"/>
    </location>
</feature>
<feature type="mutagenesis site" description="Loss of kinase activity." evidence="13">
    <original>T</original>
    <variation>A</variation>
    <location>
        <position position="180"/>
    </location>
</feature>
<feature type="mutagenesis site" description="Loss of kinase activity." evidence="13">
    <original>Y</original>
    <variation>A</variation>
    <location>
        <position position="182"/>
    </location>
</feature>
<feature type="sequence conflict" description="In Ref. 4; AAC51374." evidence="16" ref="4">
    <original>DV</original>
    <variation>EL</variation>
    <location>
        <begin position="13"/>
        <end position="14"/>
    </location>
</feature>
<feature type="sequence conflict" description="In Ref. 4; AAC51374." evidence="16" ref="4">
    <original>V</original>
    <variation>W</variation>
    <location>
        <position position="39"/>
    </location>
</feature>
<feature type="sequence conflict" description="In Ref. 3; AAC51758." evidence="16" ref="3">
    <original>L</original>
    <variation>P</variation>
    <location>
        <position position="56"/>
    </location>
</feature>
<feature type="sequence conflict" description="In Ref. 3; AAC51758." evidence="16" ref="3">
    <original>I</original>
    <variation>V</variation>
    <location>
        <position position="166"/>
    </location>
</feature>
<feature type="sequence conflict" description="In Ref. 3; AAC51758 and 5; AAD23377." evidence="16" ref="3 5">
    <original>K</original>
    <variation>R</variation>
    <location>
        <position position="224"/>
    </location>
</feature>
<feature type="helix" evidence="19">
    <location>
        <begin position="4"/>
        <end position="8"/>
    </location>
</feature>
<feature type="strand" evidence="21">
    <location>
        <begin position="9"/>
        <end position="14"/>
    </location>
</feature>
<feature type="strand" evidence="21">
    <location>
        <begin position="17"/>
        <end position="22"/>
    </location>
</feature>
<feature type="strand" evidence="21">
    <location>
        <begin position="25"/>
        <end position="33"/>
    </location>
</feature>
<feature type="strand" evidence="21">
    <location>
        <begin position="35"/>
        <end position="44"/>
    </location>
</feature>
<feature type="turn" evidence="21">
    <location>
        <begin position="45"/>
        <end position="47"/>
    </location>
</feature>
<feature type="strand" evidence="21">
    <location>
        <begin position="50"/>
        <end position="56"/>
    </location>
</feature>
<feature type="helix" evidence="21">
    <location>
        <begin position="63"/>
        <end position="78"/>
    </location>
</feature>
<feature type="strand" evidence="21">
    <location>
        <begin position="88"/>
        <end position="91"/>
    </location>
</feature>
<feature type="strand" evidence="21">
    <location>
        <begin position="95"/>
        <end position="97"/>
    </location>
</feature>
<feature type="strand" evidence="21">
    <location>
        <begin position="104"/>
        <end position="108"/>
    </location>
</feature>
<feature type="strand" evidence="19">
    <location>
        <begin position="111"/>
        <end position="113"/>
    </location>
</feature>
<feature type="helix" evidence="21">
    <location>
        <begin position="114"/>
        <end position="117"/>
    </location>
</feature>
<feature type="helix" evidence="21">
    <location>
        <begin position="124"/>
        <end position="143"/>
    </location>
</feature>
<feature type="helix" evidence="21">
    <location>
        <begin position="153"/>
        <end position="155"/>
    </location>
</feature>
<feature type="strand" evidence="21">
    <location>
        <begin position="156"/>
        <end position="158"/>
    </location>
</feature>
<feature type="strand" evidence="21">
    <location>
        <begin position="164"/>
        <end position="166"/>
    </location>
</feature>
<feature type="helix" evidence="20">
    <location>
        <begin position="186"/>
        <end position="188"/>
    </location>
</feature>
<feature type="helix" evidence="21">
    <location>
        <begin position="191"/>
        <end position="195"/>
    </location>
</feature>
<feature type="turn" evidence="20">
    <location>
        <begin position="196"/>
        <end position="198"/>
    </location>
</feature>
<feature type="helix" evidence="21">
    <location>
        <begin position="204"/>
        <end position="218"/>
    </location>
</feature>
<feature type="strand" evidence="19">
    <location>
        <begin position="222"/>
        <end position="226"/>
    </location>
</feature>
<feature type="helix" evidence="21">
    <location>
        <begin position="228"/>
        <end position="239"/>
    </location>
</feature>
<feature type="helix" evidence="21">
    <location>
        <begin position="244"/>
        <end position="247"/>
    </location>
</feature>
<feature type="helix" evidence="21">
    <location>
        <begin position="253"/>
        <end position="261"/>
    </location>
</feature>
<feature type="helix" evidence="21">
    <location>
        <begin position="270"/>
        <end position="273"/>
    </location>
</feature>
<feature type="helix" evidence="21">
    <location>
        <begin position="279"/>
        <end position="288"/>
    </location>
</feature>
<feature type="turn" evidence="21">
    <location>
        <begin position="293"/>
        <end position="295"/>
    </location>
</feature>
<feature type="helix" evidence="21">
    <location>
        <begin position="299"/>
        <end position="303"/>
    </location>
</feature>
<feature type="helix" evidence="21">
    <location>
        <begin position="306"/>
        <end position="308"/>
    </location>
</feature>
<feature type="turn" evidence="21">
    <location>
        <begin position="309"/>
        <end position="311"/>
    </location>
</feature>
<feature type="helix" evidence="21">
    <location>
        <begin position="314"/>
        <end position="316"/>
    </location>
</feature>
<feature type="helix" evidence="21">
    <location>
        <begin position="327"/>
        <end position="329"/>
    </location>
</feature>
<feature type="helix" evidence="21">
    <location>
        <begin position="335"/>
        <end position="347"/>
    </location>
</feature>
<reference key="1">
    <citation type="journal article" date="1997" name="EMBO J.">
        <title>Activation of the novel stress-activated protein kinase SAPK4 by cytokines and cellular stresses is mediated by SKK3 (MKK6); comparison of its substrate specificity with that of other SAP kinases.</title>
        <authorList>
            <person name="Goedert M."/>
            <person name="Cuenda A."/>
            <person name="Craxton M."/>
            <person name="Jakes R."/>
            <person name="Cohen P."/>
        </authorList>
    </citation>
    <scope>NUCLEOTIDE SEQUENCE [MRNA] (ISOFORM 1)</scope>
    <scope>ACTIVITY REGULATION</scope>
    <source>
        <tissue>Pituitary</tissue>
    </source>
</reference>
<reference key="2">
    <citation type="journal article" date="1997" name="J. Biol. Chem.">
        <title>Characterization of the structure and function of the fourth member of p38 group mitogen-activated protein kinases, p38delta.</title>
        <authorList>
            <person name="Jiang Y."/>
            <person name="Gram H."/>
            <person name="Zhao M."/>
            <person name="New L."/>
            <person name="Gu J."/>
            <person name="Feng L."/>
            <person name="Di Padova F."/>
            <person name="Ulevitch R.J."/>
            <person name="Han J."/>
        </authorList>
    </citation>
    <scope>NUCLEOTIDE SEQUENCE [MRNA] (ISOFORM 1)</scope>
    <scope>PHOSPHORYLATION AT THR-180 AND TYR-182</scope>
    <scope>MUTAGENESIS OF THR-180 AND TYR-182</scope>
    <scope>ACTIVITY REGULATION</scope>
    <scope>TISSUE SPECIFICITY</scope>
    <source>
        <tissue>Liver</tissue>
    </source>
</reference>
<reference key="3">
    <citation type="journal article" date="1997" name="J. Biol. Chem.">
        <title>Molecular cloning and characterization of a novel p38 mitogen-activated protein kinase.</title>
        <authorList>
            <person name="Wang X.S."/>
            <person name="Diener K."/>
            <person name="Manthey C.L."/>
            <person name="Wang S.-W."/>
            <person name="Rosenzweig B."/>
            <person name="Bray J."/>
            <person name="Delaney J."/>
            <person name="Cole C."/>
            <person name="Zukowski M."/>
            <person name="Yao Z."/>
        </authorList>
    </citation>
    <scope>NUCLEOTIDE SEQUENCE [MRNA] (ISOFORM 1)</scope>
</reference>
<reference key="4">
    <citation type="journal article" date="1997" name="Biochem. Biophys. Res. Commun.">
        <title>Novel homologues of CSBP/p38 MAP kinase: activation, substrate specificity and sensitivity to inhibition by pyridinyl imidazoles.</title>
        <authorList>
            <person name="Kumar S."/>
            <person name="McDonnell P.C."/>
            <person name="Gum R.J."/>
            <person name="Hand A.T."/>
            <person name="Lee J.C."/>
            <person name="Young P.R."/>
        </authorList>
    </citation>
    <scope>NUCLEOTIDE SEQUENCE [MRNA] (ISOFORM 1)</scope>
</reference>
<reference key="5">
    <citation type="journal article" date="1999" name="J. Biol. Chem.">
        <title>Murine p38-delta mitogen-activated protein kinase, a developmentally regulated protein kinase that is activated by stress and proinflammatory cytokines.</title>
        <authorList>
            <person name="Hu M.C.-T."/>
            <person name="Wang Y.-P."/>
            <person name="Mikhail A."/>
            <person name="Qiu W.R."/>
            <person name="Tan T.-H."/>
        </authorList>
    </citation>
    <scope>NUCLEOTIDE SEQUENCE [MRNA] (ISOFORM 1)</scope>
</reference>
<reference key="6">
    <citation type="journal article" date="1999" name="DNA Seq.">
        <title>Structure and polymorphism of two stress-activated protein kinase genes centromeric of the MHC: SAPK2a and SAPK4.</title>
        <authorList>
            <person name="Herbison C.E."/>
            <person name="Sayer D.C."/>
            <person name="Bellgard M."/>
            <person name="Allcock R.J.N."/>
            <person name="Christiansen F.T."/>
            <person name="Price P."/>
        </authorList>
    </citation>
    <scope>NUCLEOTIDE SEQUENCE [MRNA] (ISOFORM 1)</scope>
</reference>
<reference key="7">
    <citation type="submission" date="2003-05" db="EMBL/GenBank/DDBJ databases">
        <title>Cloning of human full-length CDSs in BD Creator(TM) system donor vector.</title>
        <authorList>
            <person name="Kalnine N."/>
            <person name="Chen X."/>
            <person name="Rolfs A."/>
            <person name="Halleck A."/>
            <person name="Hines L."/>
            <person name="Eisenstein S."/>
            <person name="Koundinya M."/>
            <person name="Raphael J."/>
            <person name="Moreira D."/>
            <person name="Kelley T."/>
            <person name="LaBaer J."/>
            <person name="Lin Y."/>
            <person name="Phelan M."/>
            <person name="Farmer A."/>
        </authorList>
    </citation>
    <scope>NUCLEOTIDE SEQUENCE [LARGE SCALE MRNA] (ISOFORM 1)</scope>
</reference>
<reference key="8">
    <citation type="submission" date="2004-06" db="EMBL/GenBank/DDBJ databases">
        <title>Cloning of human full open reading frames in Gateway(TM) system entry vector (pDONR201).</title>
        <authorList>
            <person name="Ebert L."/>
            <person name="Schick M."/>
            <person name="Neubert P."/>
            <person name="Schatten R."/>
            <person name="Henze S."/>
            <person name="Korn B."/>
        </authorList>
    </citation>
    <scope>NUCLEOTIDE SEQUENCE [LARGE SCALE MRNA] (ISOFORM 1)</scope>
</reference>
<reference key="9">
    <citation type="journal article" date="2003" name="Nature">
        <title>The DNA sequence and analysis of human chromosome 6.</title>
        <authorList>
            <person name="Mungall A.J."/>
            <person name="Palmer S.A."/>
            <person name="Sims S.K."/>
            <person name="Edwards C.A."/>
            <person name="Ashurst J.L."/>
            <person name="Wilming L."/>
            <person name="Jones M.C."/>
            <person name="Horton R."/>
            <person name="Hunt S.E."/>
            <person name="Scott C.E."/>
            <person name="Gilbert J.G.R."/>
            <person name="Clamp M.E."/>
            <person name="Bethel G."/>
            <person name="Milne S."/>
            <person name="Ainscough R."/>
            <person name="Almeida J.P."/>
            <person name="Ambrose K.D."/>
            <person name="Andrews T.D."/>
            <person name="Ashwell R.I.S."/>
            <person name="Babbage A.K."/>
            <person name="Bagguley C.L."/>
            <person name="Bailey J."/>
            <person name="Banerjee R."/>
            <person name="Barker D.J."/>
            <person name="Barlow K.F."/>
            <person name="Bates K."/>
            <person name="Beare D.M."/>
            <person name="Beasley H."/>
            <person name="Beasley O."/>
            <person name="Bird C.P."/>
            <person name="Blakey S.E."/>
            <person name="Bray-Allen S."/>
            <person name="Brook J."/>
            <person name="Brown A.J."/>
            <person name="Brown J.Y."/>
            <person name="Burford D.C."/>
            <person name="Burrill W."/>
            <person name="Burton J."/>
            <person name="Carder C."/>
            <person name="Carter N.P."/>
            <person name="Chapman J.C."/>
            <person name="Clark S.Y."/>
            <person name="Clark G."/>
            <person name="Clee C.M."/>
            <person name="Clegg S."/>
            <person name="Cobley V."/>
            <person name="Collier R.E."/>
            <person name="Collins J.E."/>
            <person name="Colman L.K."/>
            <person name="Corby N.R."/>
            <person name="Coville G.J."/>
            <person name="Culley K.M."/>
            <person name="Dhami P."/>
            <person name="Davies J."/>
            <person name="Dunn M."/>
            <person name="Earthrowl M.E."/>
            <person name="Ellington A.E."/>
            <person name="Evans K.A."/>
            <person name="Faulkner L."/>
            <person name="Francis M.D."/>
            <person name="Frankish A."/>
            <person name="Frankland J."/>
            <person name="French L."/>
            <person name="Garner P."/>
            <person name="Garnett J."/>
            <person name="Ghori M.J."/>
            <person name="Gilby L.M."/>
            <person name="Gillson C.J."/>
            <person name="Glithero R.J."/>
            <person name="Grafham D.V."/>
            <person name="Grant M."/>
            <person name="Gribble S."/>
            <person name="Griffiths C."/>
            <person name="Griffiths M.N.D."/>
            <person name="Hall R."/>
            <person name="Halls K.S."/>
            <person name="Hammond S."/>
            <person name="Harley J.L."/>
            <person name="Hart E.A."/>
            <person name="Heath P.D."/>
            <person name="Heathcott R."/>
            <person name="Holmes S.J."/>
            <person name="Howden P.J."/>
            <person name="Howe K.L."/>
            <person name="Howell G.R."/>
            <person name="Huckle E."/>
            <person name="Humphray S.J."/>
            <person name="Humphries M.D."/>
            <person name="Hunt A.R."/>
            <person name="Johnson C.M."/>
            <person name="Joy A.A."/>
            <person name="Kay M."/>
            <person name="Keenan S.J."/>
            <person name="Kimberley A.M."/>
            <person name="King A."/>
            <person name="Laird G.K."/>
            <person name="Langford C."/>
            <person name="Lawlor S."/>
            <person name="Leongamornlert D.A."/>
            <person name="Leversha M."/>
            <person name="Lloyd C.R."/>
            <person name="Lloyd D.M."/>
            <person name="Loveland J.E."/>
            <person name="Lovell J."/>
            <person name="Martin S."/>
            <person name="Mashreghi-Mohammadi M."/>
            <person name="Maslen G.L."/>
            <person name="Matthews L."/>
            <person name="McCann O.T."/>
            <person name="McLaren S.J."/>
            <person name="McLay K."/>
            <person name="McMurray A."/>
            <person name="Moore M.J.F."/>
            <person name="Mullikin J.C."/>
            <person name="Niblett D."/>
            <person name="Nickerson T."/>
            <person name="Novik K.L."/>
            <person name="Oliver K."/>
            <person name="Overton-Larty E.K."/>
            <person name="Parker A."/>
            <person name="Patel R."/>
            <person name="Pearce A.V."/>
            <person name="Peck A.I."/>
            <person name="Phillimore B.J.C.T."/>
            <person name="Phillips S."/>
            <person name="Plumb R.W."/>
            <person name="Porter K.M."/>
            <person name="Ramsey Y."/>
            <person name="Ranby S.A."/>
            <person name="Rice C.M."/>
            <person name="Ross M.T."/>
            <person name="Searle S.M."/>
            <person name="Sehra H.K."/>
            <person name="Sheridan E."/>
            <person name="Skuce C.D."/>
            <person name="Smith S."/>
            <person name="Smith M."/>
            <person name="Spraggon L."/>
            <person name="Squares S.L."/>
            <person name="Steward C.A."/>
            <person name="Sycamore N."/>
            <person name="Tamlyn-Hall G."/>
            <person name="Tester J."/>
            <person name="Theaker A.J."/>
            <person name="Thomas D.W."/>
            <person name="Thorpe A."/>
            <person name="Tracey A."/>
            <person name="Tromans A."/>
            <person name="Tubby B."/>
            <person name="Wall M."/>
            <person name="Wallis J.M."/>
            <person name="West A.P."/>
            <person name="White S.S."/>
            <person name="Whitehead S.L."/>
            <person name="Whittaker H."/>
            <person name="Wild A."/>
            <person name="Willey D.J."/>
            <person name="Wilmer T.E."/>
            <person name="Wood J.M."/>
            <person name="Wray P.W."/>
            <person name="Wyatt J.C."/>
            <person name="Young L."/>
            <person name="Younger R.M."/>
            <person name="Bentley D.R."/>
            <person name="Coulson A."/>
            <person name="Durbin R.M."/>
            <person name="Hubbard T."/>
            <person name="Sulston J.E."/>
            <person name="Dunham I."/>
            <person name="Rogers J."/>
            <person name="Beck S."/>
        </authorList>
    </citation>
    <scope>NUCLEOTIDE SEQUENCE [LARGE SCALE GENOMIC DNA]</scope>
</reference>
<reference key="10">
    <citation type="submission" date="2005-07" db="EMBL/GenBank/DDBJ databases">
        <authorList>
            <person name="Mural R.J."/>
            <person name="Istrail S."/>
            <person name="Sutton G.G."/>
            <person name="Florea L."/>
            <person name="Halpern A.L."/>
            <person name="Mobarry C.M."/>
            <person name="Lippert R."/>
            <person name="Walenz B."/>
            <person name="Shatkay H."/>
            <person name="Dew I."/>
            <person name="Miller J.R."/>
            <person name="Flanigan M.J."/>
            <person name="Edwards N.J."/>
            <person name="Bolanos R."/>
            <person name="Fasulo D."/>
            <person name="Halldorsson B.V."/>
            <person name="Hannenhalli S."/>
            <person name="Turner R."/>
            <person name="Yooseph S."/>
            <person name="Lu F."/>
            <person name="Nusskern D.R."/>
            <person name="Shue B.C."/>
            <person name="Zheng X.H."/>
            <person name="Zhong F."/>
            <person name="Delcher A.L."/>
            <person name="Huson D.H."/>
            <person name="Kravitz S.A."/>
            <person name="Mouchard L."/>
            <person name="Reinert K."/>
            <person name="Remington K.A."/>
            <person name="Clark A.G."/>
            <person name="Waterman M.S."/>
            <person name="Eichler E.E."/>
            <person name="Adams M.D."/>
            <person name="Hunkapiller M.W."/>
            <person name="Myers E.W."/>
            <person name="Venter J.C."/>
        </authorList>
    </citation>
    <scope>NUCLEOTIDE SEQUENCE [LARGE SCALE GENOMIC DNA]</scope>
</reference>
<reference key="11">
    <citation type="journal article" date="2004" name="Genome Res.">
        <title>The status, quality, and expansion of the NIH full-length cDNA project: the Mammalian Gene Collection (MGC).</title>
        <authorList>
            <consortium name="The MGC Project Team"/>
        </authorList>
    </citation>
    <scope>NUCLEOTIDE SEQUENCE [LARGE SCALE MRNA] (ISOFORMS 1 AND 2)</scope>
    <source>
        <tissue>Lung</tissue>
        <tissue>Pancreas</tissue>
    </source>
</reference>
<reference key="12">
    <citation type="journal article" date="1998" name="Biochem. Biophys. Res. Commun.">
        <title>Identification of stathmin as a novel substrate for p38 delta.</title>
        <authorList>
            <person name="Parker C.G."/>
            <person name="Hunt J."/>
            <person name="Diener K."/>
            <person name="McGinley M."/>
            <person name="Soriano B."/>
            <person name="Keesler G.A."/>
            <person name="Bray J."/>
            <person name="Yao Z."/>
            <person name="Wang X.S."/>
            <person name="Kohno T."/>
            <person name="Lichenstein H.S."/>
        </authorList>
    </citation>
    <scope>FUNCTION IN PHOSPHORYLATION OF STMN1</scope>
</reference>
<reference key="13">
    <citation type="journal article" date="1999" name="J. Immunol.">
        <title>Differential expression and activation of p38 mitogen-activated protein kinase alpha, beta, gamma, and delta in inflammatory cell lineages.</title>
        <authorList>
            <person name="Hale K.K."/>
            <person name="Trollinger D."/>
            <person name="Rihanek M."/>
            <person name="Manthey C.L."/>
        </authorList>
    </citation>
    <scope>TISSUE SPECIFICITY</scope>
</reference>
<reference key="14">
    <citation type="journal article" date="2001" name="Curr. Biol.">
        <title>Fibroblast growth factor homologous factors are intracellular signaling proteins.</title>
        <authorList>
            <person name="Schoorlemmer J."/>
            <person name="Goldfarb M."/>
        </authorList>
    </citation>
    <scope>INTERACTION WITH MAPK8IP2</scope>
</reference>
<reference key="15">
    <citation type="journal article" date="2001" name="EMBO J.">
        <title>A novel method to identify protein kinase substrates: eEF2 kinase is phosphorylated and inhibited by SAPK4/p38delta.</title>
        <authorList>
            <person name="Knebel A."/>
            <person name="Morrice N."/>
            <person name="Cohen P."/>
        </authorList>
    </citation>
    <scope>FUNCTION</scope>
    <scope>ACTIVITY REGULATION</scope>
</reference>
<reference key="16">
    <citation type="journal article" date="2002" name="FEBS Lett.">
        <title>Phosphorylation of microtubule-associated protein tau by stress-activated protein kinases in intact cells.</title>
        <authorList>
            <person name="Buee-Scherrer V."/>
            <person name="Goedert M."/>
        </authorList>
    </citation>
    <scope>FUNCTION IN PHOSPHORYLATION OF MAPT</scope>
</reference>
<reference key="17">
    <citation type="journal article" date="2005" name="J. Cell Sci.">
        <title>Evidence that phosphorylation of the microtubule-associated protein Tau by SAPK4/p38delta at Thr50 promotes microtubule assembly.</title>
        <authorList>
            <person name="Feijoo C."/>
            <person name="Campbell D.G."/>
            <person name="Jakes R."/>
            <person name="Goedert M."/>
            <person name="Cuenda A."/>
        </authorList>
    </citation>
    <scope>FUNCTION IN PHOSPHORYLATION OF MAPT</scope>
</reference>
<reference key="18">
    <citation type="journal article" date="2007" name="Arch. Dermatol. Res.">
        <title>Activation of PKCdelta and p38delta MAPK during okadaic acid dependent keratinocyte apoptosis.</title>
        <authorList>
            <person name="Kraft C.A."/>
            <person name="Efimova T."/>
            <person name="Eckert R.L."/>
        </authorList>
    </citation>
    <scope>FUNCTION IN KERATINOCYTE APOPTOSIS</scope>
</reference>
<reference key="19">
    <citation type="journal article" date="2008" name="Blood Cells Mol. Dis.">
        <title>p38MAPK delta controls c-Myb degradation in response to stress.</title>
        <authorList>
            <person name="Pani E."/>
            <person name="Ferrari S."/>
        </authorList>
    </citation>
    <scope>FUNCTION IN PHOSPHORYLATION OF MYB</scope>
</reference>
<reference key="20">
    <citation type="journal article" date="2008" name="J. Proteome Res.">
        <title>Phosphoproteome of resting human platelets.</title>
        <authorList>
            <person name="Zahedi R.P."/>
            <person name="Lewandrowski U."/>
            <person name="Wiesner J."/>
            <person name="Wortelkamp S."/>
            <person name="Moebius J."/>
            <person name="Schuetz C."/>
            <person name="Walter U."/>
            <person name="Gambaryan S."/>
            <person name="Sickmann A."/>
        </authorList>
    </citation>
    <scope>PHOSPHORYLATION [LARGE SCALE ANALYSIS] AT SER-47</scope>
    <scope>IDENTIFICATION BY MASS SPECTROMETRY [LARGE SCALE ANALYSIS]</scope>
    <source>
        <tissue>Platelet</tissue>
    </source>
</reference>
<reference key="21">
    <citation type="journal article" date="2008" name="Proc. Natl. Acad. Sci. U.S.A.">
        <title>MKP-1 inhibits high NaCl-induced activation of p38 but does not inhibit the activation of TonEBP/OREBP: opposite roles of p38alpha and p38delta.</title>
        <authorList>
            <person name="Zhou X."/>
            <person name="Ferraris J.D."/>
            <person name="Dmitrieva N.I."/>
            <person name="Liu Y."/>
            <person name="Burg M.B."/>
        </authorList>
    </citation>
    <scope>DEPHOSPHORYLATION BY DUSP1</scope>
    <scope>FUNCTION</scope>
</reference>
<reference key="22">
    <citation type="journal article" date="2009" name="Mol. Cell. Proteomics">
        <title>Large-scale proteomics analysis of the human kinome.</title>
        <authorList>
            <person name="Oppermann F.S."/>
            <person name="Gnad F."/>
            <person name="Olsen J.V."/>
            <person name="Hornberger R."/>
            <person name="Greff Z."/>
            <person name="Keri G."/>
            <person name="Mann M."/>
            <person name="Daub H."/>
        </authorList>
    </citation>
    <scope>PHOSPHORYLATION [LARGE SCALE ANALYSIS] AT SER-350</scope>
    <scope>IDENTIFICATION BY MASS SPECTROMETRY [LARGE SCALE ANALYSIS]</scope>
</reference>
<reference key="23">
    <citation type="journal article" date="2010" name="Biochem. Biophys. Res. Commun.">
        <title>Human p38 delta MAP kinase mediates UV irradiation induced up-regulation of the gene expression of chemokine BRAK/CXCL14.</title>
        <authorList>
            <person name="Ozawa S."/>
            <person name="Ito S."/>
            <person name="Kato Y."/>
            <person name="Kubota E."/>
            <person name="Hata R."/>
        </authorList>
    </citation>
    <scope>FUNCTION</scope>
</reference>
<reference key="24">
    <citation type="journal article" date="2010" name="Cell Cycle">
        <title>p38delta mitogen-activated protein kinase regulates skin homeostasis and tumorigenesis.</title>
        <authorList>
            <person name="Efimova T."/>
        </authorList>
    </citation>
    <scope>REVIEW ON FUNCTION</scope>
</reference>
<reference key="25">
    <citation type="journal article" date="2010" name="Biochem. J.">
        <title>Mechanisms and functions of p38 MAPK signalling.</title>
        <authorList>
            <person name="Cuadrado A."/>
            <person name="Nebreda A.R."/>
        </authorList>
    </citation>
    <scope>REVIEW ON ACTIVITY REGULATION</scope>
    <scope>REVIEW ON FUNCTION</scope>
</reference>
<reference key="26">
    <citation type="journal article" date="2011" name="BMC Syst. Biol.">
        <title>Initial characterization of the human central proteome.</title>
        <authorList>
            <person name="Burkard T.R."/>
            <person name="Planyavsky M."/>
            <person name="Kaupe I."/>
            <person name="Breitwieser F.P."/>
            <person name="Buerckstuemmer T."/>
            <person name="Bennett K.L."/>
            <person name="Superti-Furga G."/>
            <person name="Colinge J."/>
        </authorList>
    </citation>
    <scope>IDENTIFICATION BY MASS SPECTROMETRY [LARGE SCALE ANALYSIS]</scope>
</reference>
<reference key="27">
    <citation type="submission" date="2009-06" db="PDB data bank">
        <title>Crystal structure of p38delta kinase.</title>
        <authorList>
            <consortium name="New York structural genomix research consortium (NYSGXRC)"/>
        </authorList>
    </citation>
    <scope>X-RAY CRYSTALLOGRAPHY (2.09 ANGSTROMS) OF 2-352</scope>
</reference>
<reference key="28">
    <citation type="journal article" date="2007" name="Nature">
        <title>Patterns of somatic mutation in human cancer genomes.</title>
        <authorList>
            <person name="Greenman C."/>
            <person name="Stephens P."/>
            <person name="Smith R."/>
            <person name="Dalgliesh G.L."/>
            <person name="Hunter C."/>
            <person name="Bignell G."/>
            <person name="Davies H."/>
            <person name="Teague J."/>
            <person name="Butler A."/>
            <person name="Stevens C."/>
            <person name="Edkins S."/>
            <person name="O'Meara S."/>
            <person name="Vastrik I."/>
            <person name="Schmidt E.E."/>
            <person name="Avis T."/>
            <person name="Barthorpe S."/>
            <person name="Bhamra G."/>
            <person name="Buck G."/>
            <person name="Choudhury B."/>
            <person name="Clements J."/>
            <person name="Cole J."/>
            <person name="Dicks E."/>
            <person name="Forbes S."/>
            <person name="Gray K."/>
            <person name="Halliday K."/>
            <person name="Harrison R."/>
            <person name="Hills K."/>
            <person name="Hinton J."/>
            <person name="Jenkinson A."/>
            <person name="Jones D."/>
            <person name="Menzies A."/>
            <person name="Mironenko T."/>
            <person name="Perry J."/>
            <person name="Raine K."/>
            <person name="Richardson D."/>
            <person name="Shepherd R."/>
            <person name="Small A."/>
            <person name="Tofts C."/>
            <person name="Varian J."/>
            <person name="Webb T."/>
            <person name="West S."/>
            <person name="Widaa S."/>
            <person name="Yates A."/>
            <person name="Cahill D.P."/>
            <person name="Louis D.N."/>
            <person name="Goldstraw P."/>
            <person name="Nicholson A.G."/>
            <person name="Brasseur F."/>
            <person name="Looijenga L."/>
            <person name="Weber B.L."/>
            <person name="Chiew Y.-E."/>
            <person name="DeFazio A."/>
            <person name="Greaves M.F."/>
            <person name="Green A.R."/>
            <person name="Campbell P."/>
            <person name="Birney E."/>
            <person name="Easton D.F."/>
            <person name="Chenevix-Trench G."/>
            <person name="Tan M.-H."/>
            <person name="Khoo S.K."/>
            <person name="Teh B.T."/>
            <person name="Yuen S.T."/>
            <person name="Leung S.Y."/>
            <person name="Wooster R."/>
            <person name="Futreal P.A."/>
            <person name="Stratton M.R."/>
        </authorList>
    </citation>
    <scope>VARIANTS [LARGE SCALE ANALYSIS] LEU-41; VAL-282 AND THR-300</scope>
</reference>
<dbReference type="EC" id="2.7.11.24"/>
<dbReference type="EMBL" id="Y10488">
    <property type="protein sequence ID" value="CAA71512.1"/>
    <property type="molecule type" value="mRNA"/>
</dbReference>
<dbReference type="EMBL" id="U93232">
    <property type="protein sequence ID" value="AAB87639.1"/>
    <property type="molecule type" value="mRNA"/>
</dbReference>
<dbReference type="EMBL" id="AF015256">
    <property type="protein sequence ID" value="AAC51758.1"/>
    <property type="molecule type" value="mRNA"/>
</dbReference>
<dbReference type="EMBL" id="AF004709">
    <property type="protein sequence ID" value="AAC51374.1"/>
    <property type="molecule type" value="mRNA"/>
</dbReference>
<dbReference type="EMBL" id="AF092535">
    <property type="protein sequence ID" value="AAD23377.1"/>
    <property type="molecule type" value="mRNA"/>
</dbReference>
<dbReference type="EMBL" id="AF100546">
    <property type="protein sequence ID" value="AAF36772.1"/>
    <property type="molecule type" value="mRNA"/>
</dbReference>
<dbReference type="EMBL" id="BT007221">
    <property type="protein sequence ID" value="AAP35885.1"/>
    <property type="molecule type" value="mRNA"/>
</dbReference>
<dbReference type="EMBL" id="CR536490">
    <property type="protein sequence ID" value="CAG38729.1"/>
    <property type="molecule type" value="mRNA"/>
</dbReference>
<dbReference type="EMBL" id="Z95152">
    <property type="status" value="NOT_ANNOTATED_CDS"/>
    <property type="molecule type" value="Genomic_DNA"/>
</dbReference>
<dbReference type="EMBL" id="CH471081">
    <property type="protein sequence ID" value="EAX03874.1"/>
    <property type="molecule type" value="Genomic_DNA"/>
</dbReference>
<dbReference type="EMBL" id="CH471081">
    <property type="protein sequence ID" value="EAX03875.1"/>
    <property type="molecule type" value="Genomic_DNA"/>
</dbReference>
<dbReference type="EMBL" id="BC000433">
    <property type="protein sequence ID" value="AAH00433.1"/>
    <property type="molecule type" value="mRNA"/>
</dbReference>
<dbReference type="EMBL" id="BC001641">
    <property type="protein sequence ID" value="AAH01641.1"/>
    <property type="molecule type" value="mRNA"/>
</dbReference>
<dbReference type="EMBL" id="BC004428">
    <property type="protein sequence ID" value="AAH04428.1"/>
    <property type="molecule type" value="mRNA"/>
</dbReference>
<dbReference type="EMBL" id="BC085196">
    <property type="protein sequence ID" value="AAH85196.1"/>
    <property type="molecule type" value="mRNA"/>
</dbReference>
<dbReference type="CCDS" id="CCDS4818.1">
    <molecule id="O15264-1"/>
</dbReference>
<dbReference type="PIR" id="JC5528">
    <property type="entry name" value="JC5528"/>
</dbReference>
<dbReference type="RefSeq" id="NP_002745.1">
    <molecule id="O15264-1"/>
    <property type="nucleotide sequence ID" value="NM_002754.5"/>
</dbReference>
<dbReference type="PDB" id="3COI">
    <property type="method" value="X-ray"/>
    <property type="resolution" value="2.09 A"/>
    <property type="chains" value="A=2-352"/>
</dbReference>
<dbReference type="PDB" id="4EYJ">
    <property type="method" value="X-ray"/>
    <property type="resolution" value="2.10 A"/>
    <property type="chains" value="A=1-352"/>
</dbReference>
<dbReference type="PDB" id="4EYM">
    <property type="method" value="X-ray"/>
    <property type="resolution" value="2.35 A"/>
    <property type="chains" value="A=1-352"/>
</dbReference>
<dbReference type="PDB" id="4MYG">
    <property type="method" value="X-ray"/>
    <property type="resolution" value="2.59 A"/>
    <property type="chains" value="A/B=1-352"/>
</dbReference>
<dbReference type="PDB" id="4YNO">
    <property type="method" value="X-ray"/>
    <property type="resolution" value="1.70 A"/>
    <property type="chains" value="A=1-352"/>
</dbReference>
<dbReference type="PDB" id="5EKN">
    <property type="method" value="X-ray"/>
    <property type="resolution" value="2.59 A"/>
    <property type="chains" value="A=1-352"/>
</dbReference>
<dbReference type="PDB" id="5EKO">
    <property type="method" value="X-ray"/>
    <property type="resolution" value="2.00 A"/>
    <property type="chains" value="A=1-352"/>
</dbReference>
<dbReference type="PDB" id="8X23">
    <property type="method" value="X-ray"/>
    <property type="resolution" value="1.50 A"/>
    <property type="chains" value="A=1-352"/>
</dbReference>
<dbReference type="PDBsum" id="3COI"/>
<dbReference type="PDBsum" id="4EYJ"/>
<dbReference type="PDBsum" id="4EYM"/>
<dbReference type="PDBsum" id="4MYG"/>
<dbReference type="PDBsum" id="4YNO"/>
<dbReference type="PDBsum" id="5EKN"/>
<dbReference type="PDBsum" id="5EKO"/>
<dbReference type="PDBsum" id="8X23"/>
<dbReference type="SMR" id="O15264"/>
<dbReference type="BioGRID" id="111589">
    <property type="interactions" value="58"/>
</dbReference>
<dbReference type="FunCoup" id="O15264">
    <property type="interactions" value="2457"/>
</dbReference>
<dbReference type="IntAct" id="O15264">
    <property type="interactions" value="114"/>
</dbReference>
<dbReference type="MINT" id="O15264"/>
<dbReference type="STRING" id="9606.ENSP00000211287"/>
<dbReference type="BindingDB" id="O15264"/>
<dbReference type="ChEMBL" id="CHEMBL2939"/>
<dbReference type="DrugBank" id="DB12010">
    <property type="generic name" value="Fostamatinib"/>
</dbReference>
<dbReference type="DrugBank" id="DB05157">
    <property type="generic name" value="KC706"/>
</dbReference>
<dbReference type="DrugBank" id="DB01017">
    <property type="generic name" value="Minocycline"/>
</dbReference>
<dbReference type="DrugCentral" id="O15264"/>
<dbReference type="GuidetoPHARMACOLOGY" id="1502"/>
<dbReference type="iPTMnet" id="O15264"/>
<dbReference type="PhosphoSitePlus" id="O15264"/>
<dbReference type="BioMuta" id="MAPK13"/>
<dbReference type="CPTAC" id="CPTAC-3089"/>
<dbReference type="CPTAC" id="CPTAC-3090"/>
<dbReference type="CPTAC" id="CPTAC-876"/>
<dbReference type="CPTAC" id="CPTAC-877"/>
<dbReference type="jPOST" id="O15264"/>
<dbReference type="MassIVE" id="O15264"/>
<dbReference type="PaxDb" id="9606-ENSP00000211287"/>
<dbReference type="PeptideAtlas" id="O15264"/>
<dbReference type="ProteomicsDB" id="48552">
    <molecule id="O15264-1"/>
</dbReference>
<dbReference type="ProteomicsDB" id="65225"/>
<dbReference type="Pumba" id="O15264"/>
<dbReference type="ABCD" id="O15264">
    <property type="antibodies" value="8 sequenced antibodies"/>
</dbReference>
<dbReference type="Antibodypedia" id="2088">
    <property type="antibodies" value="937 antibodies from 39 providers"/>
</dbReference>
<dbReference type="DNASU" id="5603"/>
<dbReference type="Ensembl" id="ENST00000211287.9">
    <molecule id="O15264-1"/>
    <property type="protein sequence ID" value="ENSP00000211287.4"/>
    <property type="gene ID" value="ENSG00000156711.17"/>
</dbReference>
<dbReference type="Ensembl" id="ENST00000373766.9">
    <molecule id="O15264-2"/>
    <property type="protein sequence ID" value="ENSP00000362871.5"/>
    <property type="gene ID" value="ENSG00000156711.17"/>
</dbReference>
<dbReference type="GeneID" id="5603"/>
<dbReference type="KEGG" id="hsa:5603"/>
<dbReference type="MANE-Select" id="ENST00000211287.9">
    <property type="protein sequence ID" value="ENSP00000211287.4"/>
    <property type="RefSeq nucleotide sequence ID" value="NM_002754.5"/>
    <property type="RefSeq protein sequence ID" value="NP_002745.1"/>
</dbReference>
<dbReference type="UCSC" id="uc003ols.5">
    <molecule id="O15264-1"/>
    <property type="organism name" value="human"/>
</dbReference>
<dbReference type="AGR" id="HGNC:6875"/>
<dbReference type="CTD" id="5603"/>
<dbReference type="DisGeNET" id="5603"/>
<dbReference type="GeneCards" id="MAPK13"/>
<dbReference type="HGNC" id="HGNC:6875">
    <property type="gene designation" value="MAPK13"/>
</dbReference>
<dbReference type="HPA" id="ENSG00000156711">
    <property type="expression patterns" value="Tissue enhanced (esophagus)"/>
</dbReference>
<dbReference type="MIM" id="602899">
    <property type="type" value="gene"/>
</dbReference>
<dbReference type="neXtProt" id="NX_O15264"/>
<dbReference type="OpenTargets" id="ENSG00000156711"/>
<dbReference type="PharmGKB" id="PA30620"/>
<dbReference type="VEuPathDB" id="HostDB:ENSG00000156711"/>
<dbReference type="eggNOG" id="KOG0660">
    <property type="taxonomic scope" value="Eukaryota"/>
</dbReference>
<dbReference type="GeneTree" id="ENSGT00940000159584"/>
<dbReference type="HOGENOM" id="CLU_000288_181_1_1"/>
<dbReference type="InParanoid" id="O15264"/>
<dbReference type="OMA" id="IIWREAL"/>
<dbReference type="OrthoDB" id="192887at2759"/>
<dbReference type="PAN-GO" id="O15264">
    <property type="GO annotations" value="4 GO annotations based on evolutionary models"/>
</dbReference>
<dbReference type="PhylomeDB" id="O15264"/>
<dbReference type="TreeFam" id="TF105100"/>
<dbReference type="BRENDA" id="2.7.11.24">
    <property type="organism ID" value="2681"/>
</dbReference>
<dbReference type="PathwayCommons" id="O15264"/>
<dbReference type="Reactome" id="R-HSA-168638">
    <property type="pathway name" value="NOD1/2 Signaling Pathway"/>
</dbReference>
<dbReference type="Reactome" id="R-HSA-171007">
    <property type="pathway name" value="p38MAPK events"/>
</dbReference>
<dbReference type="Reactome" id="R-HSA-4420097">
    <property type="pathway name" value="VEGFA-VEGFR2 Pathway"/>
</dbReference>
<dbReference type="SignaLink" id="O15264"/>
<dbReference type="SIGNOR" id="O15264"/>
<dbReference type="BioGRID-ORCS" id="5603">
    <property type="hits" value="18 hits in 1184 CRISPR screens"/>
</dbReference>
<dbReference type="ChiTaRS" id="MAPK13">
    <property type="organism name" value="human"/>
</dbReference>
<dbReference type="EvolutionaryTrace" id="O15264"/>
<dbReference type="GeneWiki" id="MAPK13"/>
<dbReference type="GenomeRNAi" id="5603"/>
<dbReference type="Pharos" id="O15264">
    <property type="development level" value="Tchem"/>
</dbReference>
<dbReference type="PRO" id="PR:O15264"/>
<dbReference type="Proteomes" id="UP000005640">
    <property type="component" value="Chromosome 6"/>
</dbReference>
<dbReference type="RNAct" id="O15264">
    <property type="molecule type" value="protein"/>
</dbReference>
<dbReference type="Bgee" id="ENSG00000156711">
    <property type="expression patterns" value="Expressed in tongue squamous epithelium and 171 other cell types or tissues"/>
</dbReference>
<dbReference type="ExpressionAtlas" id="O15264">
    <property type="expression patterns" value="baseline and differential"/>
</dbReference>
<dbReference type="GO" id="GO:0005737">
    <property type="term" value="C:cytoplasm"/>
    <property type="evidence" value="ECO:0000318"/>
    <property type="project" value="GO_Central"/>
</dbReference>
<dbReference type="GO" id="GO:0005829">
    <property type="term" value="C:cytosol"/>
    <property type="evidence" value="ECO:0000304"/>
    <property type="project" value="Reactome"/>
</dbReference>
<dbReference type="GO" id="GO:0005634">
    <property type="term" value="C:nucleus"/>
    <property type="evidence" value="ECO:0000318"/>
    <property type="project" value="GO_Central"/>
</dbReference>
<dbReference type="GO" id="GO:0005524">
    <property type="term" value="F:ATP binding"/>
    <property type="evidence" value="ECO:0007669"/>
    <property type="project" value="UniProtKB-KW"/>
</dbReference>
<dbReference type="GO" id="GO:0004707">
    <property type="term" value="F:MAP kinase activity"/>
    <property type="evidence" value="ECO:0000314"/>
    <property type="project" value="UniProtKB"/>
</dbReference>
<dbReference type="GO" id="GO:0106310">
    <property type="term" value="F:protein serine kinase activity"/>
    <property type="evidence" value="ECO:0007669"/>
    <property type="project" value="RHEA"/>
</dbReference>
<dbReference type="GO" id="GO:0004674">
    <property type="term" value="F:protein serine/threonine kinase activity"/>
    <property type="evidence" value="ECO:0000314"/>
    <property type="project" value="MGI"/>
</dbReference>
<dbReference type="GO" id="GO:0072740">
    <property type="term" value="P:cellular response to anisomycin"/>
    <property type="evidence" value="ECO:0000314"/>
    <property type="project" value="UniProtKB"/>
</dbReference>
<dbReference type="GO" id="GO:0070301">
    <property type="term" value="P:cellular response to hydrogen peroxide"/>
    <property type="evidence" value="ECO:0000314"/>
    <property type="project" value="UniProtKB"/>
</dbReference>
<dbReference type="GO" id="GO:0071347">
    <property type="term" value="P:cellular response to interleukin-1"/>
    <property type="evidence" value="ECO:0000314"/>
    <property type="project" value="UniProtKB"/>
</dbReference>
<dbReference type="GO" id="GO:1903936">
    <property type="term" value="P:cellular response to sodium arsenite"/>
    <property type="evidence" value="ECO:0000314"/>
    <property type="project" value="UniProtKB"/>
</dbReference>
<dbReference type="GO" id="GO:0072709">
    <property type="term" value="P:cellular response to sorbitol"/>
    <property type="evidence" value="ECO:0000314"/>
    <property type="project" value="UniProtKB"/>
</dbReference>
<dbReference type="GO" id="GO:0034644">
    <property type="term" value="P:cellular response to UV"/>
    <property type="evidence" value="ECO:0000314"/>
    <property type="project" value="UniProtKB"/>
</dbReference>
<dbReference type="GO" id="GO:0035556">
    <property type="term" value="P:intracellular signal transduction"/>
    <property type="evidence" value="ECO:0000318"/>
    <property type="project" value="GO_Central"/>
</dbReference>
<dbReference type="GO" id="GO:0050729">
    <property type="term" value="P:positive regulation of inflammatory response"/>
    <property type="evidence" value="ECO:0000315"/>
    <property type="project" value="BHF-UCL"/>
</dbReference>
<dbReference type="GO" id="GO:0032755">
    <property type="term" value="P:positive regulation of interleukin-6 production"/>
    <property type="evidence" value="ECO:0000315"/>
    <property type="project" value="BHF-UCL"/>
</dbReference>
<dbReference type="GO" id="GO:0006970">
    <property type="term" value="P:response to osmotic stress"/>
    <property type="evidence" value="ECO:0000314"/>
    <property type="project" value="UniProtKB"/>
</dbReference>
<dbReference type="GO" id="GO:0051403">
    <property type="term" value="P:stress-activated MAPK cascade"/>
    <property type="evidence" value="ECO:0000314"/>
    <property type="project" value="UniProtKB"/>
</dbReference>
<dbReference type="CDD" id="cd07879">
    <property type="entry name" value="STKc_p38delta"/>
    <property type="match status" value="1"/>
</dbReference>
<dbReference type="FunFam" id="1.10.510.10:FF:000170">
    <property type="entry name" value="Mitogen-activated protein kinase"/>
    <property type="match status" value="1"/>
</dbReference>
<dbReference type="FunFam" id="3.30.200.20:FF:000769">
    <property type="entry name" value="Mitogen-activated protein kinase 14"/>
    <property type="match status" value="1"/>
</dbReference>
<dbReference type="Gene3D" id="3.30.200.20">
    <property type="entry name" value="Phosphorylase Kinase, domain 1"/>
    <property type="match status" value="1"/>
</dbReference>
<dbReference type="Gene3D" id="1.10.510.10">
    <property type="entry name" value="Transferase(Phosphotransferase) domain 1"/>
    <property type="match status" value="1"/>
</dbReference>
<dbReference type="InterPro" id="IPR011009">
    <property type="entry name" value="Kinase-like_dom_sf"/>
</dbReference>
<dbReference type="InterPro" id="IPR050117">
    <property type="entry name" value="MAP_kinase"/>
</dbReference>
<dbReference type="InterPro" id="IPR003527">
    <property type="entry name" value="MAP_kinase_CS"/>
</dbReference>
<dbReference type="InterPro" id="IPR038785">
    <property type="entry name" value="MAPK13"/>
</dbReference>
<dbReference type="InterPro" id="IPR008352">
    <property type="entry name" value="MAPK_p38-like"/>
</dbReference>
<dbReference type="InterPro" id="IPR000719">
    <property type="entry name" value="Prot_kinase_dom"/>
</dbReference>
<dbReference type="InterPro" id="IPR017441">
    <property type="entry name" value="Protein_kinase_ATP_BS"/>
</dbReference>
<dbReference type="PANTHER" id="PTHR24055">
    <property type="entry name" value="MITOGEN-ACTIVATED PROTEIN KINASE"/>
    <property type="match status" value="1"/>
</dbReference>
<dbReference type="Pfam" id="PF00069">
    <property type="entry name" value="Pkinase"/>
    <property type="match status" value="1"/>
</dbReference>
<dbReference type="PRINTS" id="PR01773">
    <property type="entry name" value="P38MAPKINASE"/>
</dbReference>
<dbReference type="SMART" id="SM00220">
    <property type="entry name" value="S_TKc"/>
    <property type="match status" value="1"/>
</dbReference>
<dbReference type="SUPFAM" id="SSF56112">
    <property type="entry name" value="Protein kinase-like (PK-like)"/>
    <property type="match status" value="1"/>
</dbReference>
<dbReference type="PROSITE" id="PS01351">
    <property type="entry name" value="MAPK"/>
    <property type="match status" value="1"/>
</dbReference>
<dbReference type="PROSITE" id="PS00107">
    <property type="entry name" value="PROTEIN_KINASE_ATP"/>
    <property type="match status" value="1"/>
</dbReference>
<dbReference type="PROSITE" id="PS50011">
    <property type="entry name" value="PROTEIN_KINASE_DOM"/>
    <property type="match status" value="1"/>
</dbReference>
<keyword id="KW-0002">3D-structure</keyword>
<keyword id="KW-0025">Alternative splicing</keyword>
<keyword id="KW-0067">ATP-binding</keyword>
<keyword id="KW-0131">Cell cycle</keyword>
<keyword id="KW-0418">Kinase</keyword>
<keyword id="KW-0547">Nucleotide-binding</keyword>
<keyword id="KW-0597">Phosphoprotein</keyword>
<keyword id="KW-1267">Proteomics identification</keyword>
<keyword id="KW-1185">Reference proteome</keyword>
<keyword id="KW-0723">Serine/threonine-protein kinase</keyword>
<keyword id="KW-0346">Stress response</keyword>
<keyword id="KW-0804">Transcription</keyword>
<keyword id="KW-0805">Transcription regulation</keyword>
<keyword id="KW-0808">Transferase</keyword>
<name>MK13_HUMAN</name>
<organism>
    <name type="scientific">Homo sapiens</name>
    <name type="common">Human</name>
    <dbReference type="NCBI Taxonomy" id="9606"/>
    <lineage>
        <taxon>Eukaryota</taxon>
        <taxon>Metazoa</taxon>
        <taxon>Chordata</taxon>
        <taxon>Craniata</taxon>
        <taxon>Vertebrata</taxon>
        <taxon>Euteleostomi</taxon>
        <taxon>Mammalia</taxon>
        <taxon>Eutheria</taxon>
        <taxon>Euarchontoglires</taxon>
        <taxon>Primates</taxon>
        <taxon>Haplorrhini</taxon>
        <taxon>Catarrhini</taxon>
        <taxon>Hominidae</taxon>
        <taxon>Homo</taxon>
    </lineage>
</organism>
<protein>
    <recommendedName>
        <fullName>Mitogen-activated protein kinase 13</fullName>
        <shortName>MAP kinase 13</shortName>
        <shortName>MAPK 13</shortName>
        <ecNumber>2.7.11.24</ecNumber>
    </recommendedName>
    <alternativeName>
        <fullName>Mitogen-activated protein kinase p38 delta</fullName>
        <shortName>MAP kinase p38 delta</shortName>
    </alternativeName>
    <alternativeName>
        <fullName>Stress-activated protein kinase 4</fullName>
    </alternativeName>
</protein>
<evidence type="ECO:0000255" key="1">
    <source>
        <dbReference type="PROSITE-ProRule" id="PRU00159"/>
    </source>
</evidence>
<evidence type="ECO:0000269" key="2">
    <source>
    </source>
</evidence>
<evidence type="ECO:0000269" key="3">
    <source>
    </source>
</evidence>
<evidence type="ECO:0000269" key="4">
    <source>
    </source>
</evidence>
<evidence type="ECO:0000269" key="5">
    <source>
    </source>
</evidence>
<evidence type="ECO:0000269" key="6">
    <source>
    </source>
</evidence>
<evidence type="ECO:0000269" key="7">
    <source>
    </source>
</evidence>
<evidence type="ECO:0000269" key="8">
    <source>
    </source>
</evidence>
<evidence type="ECO:0000269" key="9">
    <source>
    </source>
</evidence>
<evidence type="ECO:0000269" key="10">
    <source>
    </source>
</evidence>
<evidence type="ECO:0000269" key="11">
    <source>
    </source>
</evidence>
<evidence type="ECO:0000269" key="12">
    <source>
    </source>
</evidence>
<evidence type="ECO:0000269" key="13">
    <source>
    </source>
</evidence>
<evidence type="ECO:0000269" key="14">
    <source>
    </source>
</evidence>
<evidence type="ECO:0000303" key="15">
    <source>
    </source>
</evidence>
<evidence type="ECO:0000305" key="16"/>
<evidence type="ECO:0007744" key="17">
    <source>
    </source>
</evidence>
<evidence type="ECO:0007744" key="18">
    <source>
    </source>
</evidence>
<evidence type="ECO:0007829" key="19">
    <source>
        <dbReference type="PDB" id="3COI"/>
    </source>
</evidence>
<evidence type="ECO:0007829" key="20">
    <source>
        <dbReference type="PDB" id="4MYG"/>
    </source>
</evidence>
<evidence type="ECO:0007829" key="21">
    <source>
        <dbReference type="PDB" id="4YNO"/>
    </source>
</evidence>
<accession>O15264</accession>
<accession>O14739</accession>
<accession>O15124</accession>
<accession>Q5U4A5</accession>
<accession>Q6FI46</accession>
<accession>Q9UNU0</accession>
<comment type="function">
    <text evidence="4 5 6 7 9 10 11 14">Serine/threonine kinase which acts as an essential component of the MAP kinase signal transduction pathway. MAPK13 is one of the four p38 MAPKs which play an important role in the cascades of cellular responses evoked by extracellular stimuli such as pro-inflammatory cytokines or physical stress leading to direct activation of transcription factors such as ELK1 and ATF2. Accordingly, p38 MAPKs phosphorylate a broad range of proteins and it has been estimated that they may have approximately 200 to 300 substrates each. MAPK13 is one of the less studied p38 MAPK isoforms. Some of the targets are downstream kinases such as MAPKAPK2, which are activated through phosphorylation and further phosphorylate additional targets. Plays a role in the regulation of protein translation by phosphorylating and inactivating EEF2K. Involved in cytoskeletal remodeling through phosphorylation of MAPT and STMN1. Mediates UV irradiation induced up-regulation of the gene expression of CXCL14. Plays an important role in the regulation of epidermal keratinocyte differentiation, apoptosis and skin tumor development. Phosphorylates the transcriptional activator MYB in response to stress which leads to rapid MYB degradation via a proteasome-dependent pathway. MAPK13 also phosphorylates and down-regulates PRKD1 during regulation of insulin secretion in pancreatic beta cells.</text>
</comment>
<comment type="catalytic activity">
    <reaction>
        <text>L-seryl-[protein] + ATP = O-phospho-L-seryl-[protein] + ADP + H(+)</text>
        <dbReference type="Rhea" id="RHEA:17989"/>
        <dbReference type="Rhea" id="RHEA-COMP:9863"/>
        <dbReference type="Rhea" id="RHEA-COMP:11604"/>
        <dbReference type="ChEBI" id="CHEBI:15378"/>
        <dbReference type="ChEBI" id="CHEBI:29999"/>
        <dbReference type="ChEBI" id="CHEBI:30616"/>
        <dbReference type="ChEBI" id="CHEBI:83421"/>
        <dbReference type="ChEBI" id="CHEBI:456216"/>
        <dbReference type="EC" id="2.7.11.24"/>
    </reaction>
</comment>
<comment type="catalytic activity">
    <reaction>
        <text>L-threonyl-[protein] + ATP = O-phospho-L-threonyl-[protein] + ADP + H(+)</text>
        <dbReference type="Rhea" id="RHEA:46608"/>
        <dbReference type="Rhea" id="RHEA-COMP:11060"/>
        <dbReference type="Rhea" id="RHEA-COMP:11605"/>
        <dbReference type="ChEBI" id="CHEBI:15378"/>
        <dbReference type="ChEBI" id="CHEBI:30013"/>
        <dbReference type="ChEBI" id="CHEBI:30616"/>
        <dbReference type="ChEBI" id="CHEBI:61977"/>
        <dbReference type="ChEBI" id="CHEBI:456216"/>
        <dbReference type="EC" id="2.7.11.24"/>
    </reaction>
</comment>
<comment type="cofactor">
    <cofactor>
        <name>Mg(2+)</name>
        <dbReference type="ChEBI" id="CHEBI:18420"/>
    </cofactor>
</comment>
<comment type="activity regulation">
    <text evidence="4 12 13">Activated by phosphorylation on threonine and tyrosine by dual specificity kinases, MAP2K3/MKK3, MAP2K6/MKK6, MAP2K4/MKK4 and MAP2K7/MKK7. Activation by ultraviolet radiation, hyperosmotic shock, anisomycin or by TNF-alpha is mediated by MAP2K3/MKK3. Inhibited by dual specificity phosphatase DUSP1.</text>
</comment>
<comment type="subunit">
    <text evidence="3">Interacts with MAPK8IP2.</text>
</comment>
<comment type="interaction">
    <interactant intactId="EBI-2116951">
        <id>O15264</id>
    </interactant>
    <interactant intactId="EBI-2869495">
        <id>P21462</id>
        <label>FPR1</label>
    </interactant>
    <organismsDiffer>false</organismsDiffer>
    <experiments>3</experiments>
</comment>
<comment type="interaction">
    <interactant intactId="EBI-2116951">
        <id>O15264</id>
    </interactant>
    <interactant intactId="EBI-6150673">
        <id>A5A3E0</id>
        <label>POTEF</label>
    </interactant>
    <organismsDiffer>false</organismsDiffer>
    <experiments>2</experiments>
</comment>
<comment type="interaction">
    <interactant intactId="EBI-2116951">
        <id>O15264</id>
    </interactant>
    <interactant intactId="EBI-1181072">
        <id>Q15139</id>
        <label>PRKD1</label>
    </interactant>
    <organismsDiffer>false</organismsDiffer>
    <experiments>6</experiments>
</comment>
<comment type="interaction">
    <interactant intactId="EBI-2116951">
        <id>O15264</id>
    </interactant>
    <interactant intactId="EBI-518675">
        <id>P40763</id>
        <label>STAT3</label>
    </interactant>
    <organismsDiffer>false</organismsDiffer>
    <experiments>2</experiments>
</comment>
<comment type="alternative products">
    <event type="alternative splicing"/>
    <isoform>
        <id>O15264-1</id>
        <name>1</name>
        <sequence type="displayed"/>
    </isoform>
    <isoform>
        <id>O15264-2</id>
        <name>2</name>
        <sequence type="described" ref="VSP_056558 VSP_056559"/>
    </isoform>
</comment>
<comment type="tissue specificity">
    <text evidence="2 13">Expressed in testes, pancreas, small intestine, lung and kidney. Abundant in macrophages, also present in neutrophils, CD4+ T-cells, and endothelial cells.</text>
</comment>
<comment type="domain">
    <text>The TXY motif contains the threonine and tyrosine residues whose phosphorylation activates the MAP kinases.</text>
</comment>
<comment type="PTM">
    <text evidence="13">Dually phosphorylated on Thr-180 and Tyr-182 by MAP2K3/MKK3, MAP2K4/MKK4, MAP2K6/MKK6 and MAP2K7/MKK7, which activates the enzyme. Dephosphorylated by dual specificity phosphatase DUSP1.</text>
</comment>
<comment type="similarity">
    <text evidence="16">Belongs to the protein kinase superfamily. CMGC Ser/Thr protein kinase family. MAP kinase subfamily.</text>
</comment>
<comment type="online information" name="Atlas of Genetics and Cytogenetics in Oncology and Haematology">
    <link uri="https://atlasgeneticsoncology.org/gene/41291/MAPK13"/>
</comment>
<sequence>MSLIRKKGFYKQDVNKTAWELPKTYVSPTHVGSGAYGSVCSAIDKRSGEKVAIKKLSRPFQSEIFAKRAYRELLLLKHMQHENVIGLLDVFTPASSLRNFYDFYLVMPFMQTDLQKIMGMEFSEEKIQYLVYQMLKGLKYIHSAGVVHRDLKPGNLAVNEDCELKILDFGLARHADAEMTGYVVTRWYRAPEVILSWMHYNQTVDIWSVGCIMAEMLTGKTLFKGKDYLDQLTQILKVTGVPGTEFVQKLNDKAAKSYIQSLPQTPRKDFTQLFPRASPQAADLLEKMLELDVDKRLTAAQALTHPFFEPFRDPEEETEAQQPFDDSLEHEKLTVDEWKQHIYKEIVNFSPIARKDSRRRSGMKL</sequence>
<gene>
    <name type="primary">MAPK13</name>
    <name type="synonym">PRKM13</name>
    <name type="synonym">SAPK4</name>
</gene>